<protein>
    <recommendedName>
        <fullName evidence="1">Argininosuccinate synthase</fullName>
        <ecNumber evidence="1">6.3.4.5</ecNumber>
    </recommendedName>
    <alternativeName>
        <fullName evidence="1">Citrulline--aspartate ligase</fullName>
    </alternativeName>
</protein>
<gene>
    <name evidence="1" type="primary">argG</name>
    <name type="ordered locus">str1813</name>
</gene>
<accession>Q5LXZ8</accession>
<evidence type="ECO:0000255" key="1">
    <source>
        <dbReference type="HAMAP-Rule" id="MF_00005"/>
    </source>
</evidence>
<evidence type="ECO:0000305" key="2"/>
<proteinExistence type="inferred from homology"/>
<organism>
    <name type="scientific">Streptococcus thermophilus (strain CNRZ 1066)</name>
    <dbReference type="NCBI Taxonomy" id="299768"/>
    <lineage>
        <taxon>Bacteria</taxon>
        <taxon>Bacillati</taxon>
        <taxon>Bacillota</taxon>
        <taxon>Bacilli</taxon>
        <taxon>Lactobacillales</taxon>
        <taxon>Streptococcaceae</taxon>
        <taxon>Streptococcus</taxon>
    </lineage>
</organism>
<feature type="chain" id="PRO_0000148649" description="Argininosuccinate synthase">
    <location>
        <begin position="1"/>
        <end position="399"/>
    </location>
</feature>
<feature type="binding site" evidence="1">
    <location>
        <begin position="9"/>
        <end position="17"/>
    </location>
    <ligand>
        <name>ATP</name>
        <dbReference type="ChEBI" id="CHEBI:30616"/>
    </ligand>
</feature>
<feature type="binding site" evidence="1">
    <location>
        <position position="85"/>
    </location>
    <ligand>
        <name>L-citrulline</name>
        <dbReference type="ChEBI" id="CHEBI:57743"/>
    </ligand>
</feature>
<feature type="binding site" evidence="1">
    <location>
        <position position="115"/>
    </location>
    <ligand>
        <name>ATP</name>
        <dbReference type="ChEBI" id="CHEBI:30616"/>
    </ligand>
</feature>
<feature type="binding site" evidence="1">
    <location>
        <position position="117"/>
    </location>
    <ligand>
        <name>L-aspartate</name>
        <dbReference type="ChEBI" id="CHEBI:29991"/>
    </ligand>
</feature>
<feature type="binding site" evidence="1">
    <location>
        <position position="121"/>
    </location>
    <ligand>
        <name>L-aspartate</name>
        <dbReference type="ChEBI" id="CHEBI:29991"/>
    </ligand>
</feature>
<feature type="binding site" evidence="1">
    <location>
        <position position="121"/>
    </location>
    <ligand>
        <name>L-citrulline</name>
        <dbReference type="ChEBI" id="CHEBI:57743"/>
    </ligand>
</feature>
<feature type="binding site" evidence="1">
    <location>
        <position position="122"/>
    </location>
    <ligand>
        <name>L-aspartate</name>
        <dbReference type="ChEBI" id="CHEBI:29991"/>
    </ligand>
</feature>
<feature type="binding site" evidence="1">
    <location>
        <position position="125"/>
    </location>
    <ligand>
        <name>L-citrulline</name>
        <dbReference type="ChEBI" id="CHEBI:57743"/>
    </ligand>
</feature>
<feature type="binding site" evidence="1">
    <location>
        <position position="173"/>
    </location>
    <ligand>
        <name>L-citrulline</name>
        <dbReference type="ChEBI" id="CHEBI:57743"/>
    </ligand>
</feature>
<feature type="binding site" evidence="1">
    <location>
        <position position="258"/>
    </location>
    <ligand>
        <name>L-citrulline</name>
        <dbReference type="ChEBI" id="CHEBI:57743"/>
    </ligand>
</feature>
<feature type="binding site" evidence="1">
    <location>
        <position position="270"/>
    </location>
    <ligand>
        <name>L-citrulline</name>
        <dbReference type="ChEBI" id="CHEBI:57743"/>
    </ligand>
</feature>
<name>ASSY_STRT1</name>
<comment type="catalytic activity">
    <reaction evidence="1">
        <text>L-citrulline + L-aspartate + ATP = 2-(N(omega)-L-arginino)succinate + AMP + diphosphate + H(+)</text>
        <dbReference type="Rhea" id="RHEA:10932"/>
        <dbReference type="ChEBI" id="CHEBI:15378"/>
        <dbReference type="ChEBI" id="CHEBI:29991"/>
        <dbReference type="ChEBI" id="CHEBI:30616"/>
        <dbReference type="ChEBI" id="CHEBI:33019"/>
        <dbReference type="ChEBI" id="CHEBI:57472"/>
        <dbReference type="ChEBI" id="CHEBI:57743"/>
        <dbReference type="ChEBI" id="CHEBI:456215"/>
        <dbReference type="EC" id="6.3.4.5"/>
    </reaction>
</comment>
<comment type="pathway">
    <text evidence="1">Amino-acid biosynthesis; L-arginine biosynthesis; L-arginine from L-ornithine and carbamoyl phosphate: step 2/3.</text>
</comment>
<comment type="subunit">
    <text evidence="1">Homotetramer.</text>
</comment>
<comment type="subcellular location">
    <subcellularLocation>
        <location evidence="1">Cytoplasm</location>
    </subcellularLocation>
</comment>
<comment type="similarity">
    <text evidence="1">Belongs to the argininosuccinate synthase family. Type 1 subfamily.</text>
</comment>
<comment type="sequence caution" evidence="2">
    <conflict type="erroneous initiation">
        <sequence resource="EMBL-CDS" id="AAV63329"/>
    </conflict>
</comment>
<sequence length="399" mass="44055">MSKEKVILAYSGGLDTSVAITWLKKDYDVIAVCMDVGEGKDLEFIHDKALTVGAVESYVLDVKDEFAEDYVLPALQAHAYYEQKYPLVSALSRPIIAKKLVEIAHKTGATTIAHGCTGKGNDQVRFEVAIAALDPSLKVVAPVREWKWSREEEIEYAKANGVPVPADLDNPYSVDQNLWGRANECGVLENPWNQAPEEAFGITNSPESAPDEAEYVDVTFKEGKPVALNGKEMKLADLIQEMNVIAGKHGVGRIDHVENRLVGIKSREIYECPGAIALLTAHKEIEDLTLVREVSHFKPILENELSNLIYNALWFSPATEAIIAYIKETQKVVNGIAKVKLYKGHAQVVARQSANSLYDENLATYTSADSFDQDAAIGFIKLWGLPTQVNSQVNHPFDK</sequence>
<dbReference type="EC" id="6.3.4.5" evidence="1"/>
<dbReference type="EMBL" id="CP000024">
    <property type="protein sequence ID" value="AAV63329.1"/>
    <property type="status" value="ALT_INIT"/>
    <property type="molecule type" value="Genomic_DNA"/>
</dbReference>
<dbReference type="RefSeq" id="WP_002953531.1">
    <property type="nucleotide sequence ID" value="NC_006449.1"/>
</dbReference>
<dbReference type="SMR" id="Q5LXZ8"/>
<dbReference type="KEGG" id="stc:str1813"/>
<dbReference type="HOGENOM" id="CLU_032784_4_2_9"/>
<dbReference type="UniPathway" id="UPA00068">
    <property type="reaction ID" value="UER00113"/>
</dbReference>
<dbReference type="GO" id="GO:0005737">
    <property type="term" value="C:cytoplasm"/>
    <property type="evidence" value="ECO:0007669"/>
    <property type="project" value="UniProtKB-SubCell"/>
</dbReference>
<dbReference type="GO" id="GO:0004055">
    <property type="term" value="F:argininosuccinate synthase activity"/>
    <property type="evidence" value="ECO:0007669"/>
    <property type="project" value="UniProtKB-UniRule"/>
</dbReference>
<dbReference type="GO" id="GO:0005524">
    <property type="term" value="F:ATP binding"/>
    <property type="evidence" value="ECO:0007669"/>
    <property type="project" value="UniProtKB-UniRule"/>
</dbReference>
<dbReference type="GO" id="GO:0000053">
    <property type="term" value="P:argininosuccinate metabolic process"/>
    <property type="evidence" value="ECO:0007669"/>
    <property type="project" value="TreeGrafter"/>
</dbReference>
<dbReference type="GO" id="GO:0006526">
    <property type="term" value="P:L-arginine biosynthetic process"/>
    <property type="evidence" value="ECO:0007669"/>
    <property type="project" value="UniProtKB-UniRule"/>
</dbReference>
<dbReference type="GO" id="GO:0000050">
    <property type="term" value="P:urea cycle"/>
    <property type="evidence" value="ECO:0007669"/>
    <property type="project" value="TreeGrafter"/>
</dbReference>
<dbReference type="CDD" id="cd01999">
    <property type="entry name" value="ASS"/>
    <property type="match status" value="1"/>
</dbReference>
<dbReference type="FunFam" id="1.20.5.470:FF:000002">
    <property type="entry name" value="Argininosuccinate synthase"/>
    <property type="match status" value="1"/>
</dbReference>
<dbReference type="FunFam" id="3.40.50.620:FF:000038">
    <property type="entry name" value="Argininosuccinate synthase"/>
    <property type="match status" value="1"/>
</dbReference>
<dbReference type="FunFam" id="3.90.1260.10:FF:000007">
    <property type="entry name" value="Argininosuccinate synthase"/>
    <property type="match status" value="1"/>
</dbReference>
<dbReference type="Gene3D" id="3.90.1260.10">
    <property type="entry name" value="Argininosuccinate synthetase, chain A, domain 2"/>
    <property type="match status" value="1"/>
</dbReference>
<dbReference type="Gene3D" id="3.40.50.620">
    <property type="entry name" value="HUPs"/>
    <property type="match status" value="1"/>
</dbReference>
<dbReference type="Gene3D" id="1.20.5.470">
    <property type="entry name" value="Single helix bin"/>
    <property type="match status" value="1"/>
</dbReference>
<dbReference type="HAMAP" id="MF_00005">
    <property type="entry name" value="Arg_succ_synth_type1"/>
    <property type="match status" value="1"/>
</dbReference>
<dbReference type="InterPro" id="IPR048268">
    <property type="entry name" value="Arginosuc_syn_C"/>
</dbReference>
<dbReference type="InterPro" id="IPR048267">
    <property type="entry name" value="Arginosuc_syn_N"/>
</dbReference>
<dbReference type="InterPro" id="IPR001518">
    <property type="entry name" value="Arginosuc_synth"/>
</dbReference>
<dbReference type="InterPro" id="IPR018223">
    <property type="entry name" value="Arginosuc_synth_CS"/>
</dbReference>
<dbReference type="InterPro" id="IPR023434">
    <property type="entry name" value="Arginosuc_synth_type_1_subfam"/>
</dbReference>
<dbReference type="InterPro" id="IPR024074">
    <property type="entry name" value="AS_cat/multimer_dom_body"/>
</dbReference>
<dbReference type="InterPro" id="IPR014729">
    <property type="entry name" value="Rossmann-like_a/b/a_fold"/>
</dbReference>
<dbReference type="NCBIfam" id="TIGR00032">
    <property type="entry name" value="argG"/>
    <property type="match status" value="1"/>
</dbReference>
<dbReference type="NCBIfam" id="NF001770">
    <property type="entry name" value="PRK00509.1"/>
    <property type="match status" value="1"/>
</dbReference>
<dbReference type="PANTHER" id="PTHR11587">
    <property type="entry name" value="ARGININOSUCCINATE SYNTHASE"/>
    <property type="match status" value="1"/>
</dbReference>
<dbReference type="PANTHER" id="PTHR11587:SF2">
    <property type="entry name" value="ARGININOSUCCINATE SYNTHASE"/>
    <property type="match status" value="1"/>
</dbReference>
<dbReference type="Pfam" id="PF20979">
    <property type="entry name" value="Arginosuc_syn_C"/>
    <property type="match status" value="1"/>
</dbReference>
<dbReference type="Pfam" id="PF00764">
    <property type="entry name" value="Arginosuc_synth"/>
    <property type="match status" value="1"/>
</dbReference>
<dbReference type="SUPFAM" id="SSF52402">
    <property type="entry name" value="Adenine nucleotide alpha hydrolases-like"/>
    <property type="match status" value="1"/>
</dbReference>
<dbReference type="SUPFAM" id="SSF69864">
    <property type="entry name" value="Argininosuccinate synthetase, C-terminal domain"/>
    <property type="match status" value="1"/>
</dbReference>
<dbReference type="PROSITE" id="PS00564">
    <property type="entry name" value="ARGININOSUCCIN_SYN_1"/>
    <property type="match status" value="1"/>
</dbReference>
<dbReference type="PROSITE" id="PS00565">
    <property type="entry name" value="ARGININOSUCCIN_SYN_2"/>
    <property type="match status" value="1"/>
</dbReference>
<reference key="1">
    <citation type="journal article" date="2004" name="Nat. Biotechnol.">
        <title>Complete sequence and comparative genome analysis of the dairy bacterium Streptococcus thermophilus.</title>
        <authorList>
            <person name="Bolotin A."/>
            <person name="Quinquis B."/>
            <person name="Renault P."/>
            <person name="Sorokin A."/>
            <person name="Ehrlich S.D."/>
            <person name="Kulakauskas S."/>
            <person name="Lapidus A."/>
            <person name="Goltsman E."/>
            <person name="Mazur M."/>
            <person name="Pusch G.D."/>
            <person name="Fonstein M."/>
            <person name="Overbeek R."/>
            <person name="Kyprides N."/>
            <person name="Purnelle B."/>
            <person name="Prozzi D."/>
            <person name="Ngui K."/>
            <person name="Masuy D."/>
            <person name="Hancy F."/>
            <person name="Burteau S."/>
            <person name="Boutry M."/>
            <person name="Delcour J."/>
            <person name="Goffeau A."/>
            <person name="Hols P."/>
        </authorList>
    </citation>
    <scope>NUCLEOTIDE SEQUENCE [LARGE SCALE GENOMIC DNA]</scope>
    <source>
        <strain>CNRZ 1066</strain>
    </source>
</reference>
<keyword id="KW-0028">Amino-acid biosynthesis</keyword>
<keyword id="KW-0055">Arginine biosynthesis</keyword>
<keyword id="KW-0067">ATP-binding</keyword>
<keyword id="KW-0963">Cytoplasm</keyword>
<keyword id="KW-0436">Ligase</keyword>
<keyword id="KW-0547">Nucleotide-binding</keyword>